<comment type="function">
    <text evidence="1">Forms part of the ribosomal stalk, playing a central role in the interaction of the ribosome with GTP-bound translation factors.</text>
</comment>
<comment type="subunit">
    <text evidence="1">Part of the ribosomal stalk of the 50S ribosomal subunit. The N-terminus interacts with L11 and the large rRNA to form the base of the stalk. The C-terminus forms an elongated spine to which L12 dimers bind in a sequential fashion forming a multimeric L10(L12)X complex.</text>
</comment>
<comment type="similarity">
    <text evidence="1">Belongs to the universal ribosomal protein uL10 family.</text>
</comment>
<dbReference type="EMBL" id="CP001280">
    <property type="protein sequence ID" value="ACK52748.1"/>
    <property type="molecule type" value="Genomic_DNA"/>
</dbReference>
<dbReference type="RefSeq" id="WP_012592816.1">
    <property type="nucleotide sequence ID" value="NC_011666.1"/>
</dbReference>
<dbReference type="SMR" id="B8EMR9"/>
<dbReference type="STRING" id="395965.Msil_3866"/>
<dbReference type="KEGG" id="msl:Msil_3866"/>
<dbReference type="eggNOG" id="COG0244">
    <property type="taxonomic scope" value="Bacteria"/>
</dbReference>
<dbReference type="HOGENOM" id="CLU_092227_0_0_5"/>
<dbReference type="OrthoDB" id="9791972at2"/>
<dbReference type="Proteomes" id="UP000002257">
    <property type="component" value="Chromosome"/>
</dbReference>
<dbReference type="GO" id="GO:0015934">
    <property type="term" value="C:large ribosomal subunit"/>
    <property type="evidence" value="ECO:0007669"/>
    <property type="project" value="InterPro"/>
</dbReference>
<dbReference type="GO" id="GO:0070180">
    <property type="term" value="F:large ribosomal subunit rRNA binding"/>
    <property type="evidence" value="ECO:0007669"/>
    <property type="project" value="UniProtKB-UniRule"/>
</dbReference>
<dbReference type="GO" id="GO:0003735">
    <property type="term" value="F:structural constituent of ribosome"/>
    <property type="evidence" value="ECO:0007669"/>
    <property type="project" value="InterPro"/>
</dbReference>
<dbReference type="GO" id="GO:0006412">
    <property type="term" value="P:translation"/>
    <property type="evidence" value="ECO:0007669"/>
    <property type="project" value="UniProtKB-UniRule"/>
</dbReference>
<dbReference type="CDD" id="cd05797">
    <property type="entry name" value="Ribosomal_L10"/>
    <property type="match status" value="1"/>
</dbReference>
<dbReference type="Gene3D" id="3.30.70.1730">
    <property type="match status" value="1"/>
</dbReference>
<dbReference type="Gene3D" id="6.10.250.290">
    <property type="match status" value="1"/>
</dbReference>
<dbReference type="HAMAP" id="MF_00362">
    <property type="entry name" value="Ribosomal_uL10"/>
    <property type="match status" value="1"/>
</dbReference>
<dbReference type="InterPro" id="IPR001790">
    <property type="entry name" value="Ribosomal_uL10"/>
</dbReference>
<dbReference type="InterPro" id="IPR043141">
    <property type="entry name" value="Ribosomal_uL10-like_sf"/>
</dbReference>
<dbReference type="InterPro" id="IPR022973">
    <property type="entry name" value="Ribosomal_uL10_bac"/>
</dbReference>
<dbReference type="InterPro" id="IPR047865">
    <property type="entry name" value="Ribosomal_uL10_bac_type"/>
</dbReference>
<dbReference type="InterPro" id="IPR002363">
    <property type="entry name" value="Ribosomal_uL10_CS_bac"/>
</dbReference>
<dbReference type="NCBIfam" id="NF000955">
    <property type="entry name" value="PRK00099.1-1"/>
    <property type="match status" value="1"/>
</dbReference>
<dbReference type="PANTHER" id="PTHR11560">
    <property type="entry name" value="39S RIBOSOMAL PROTEIN L10, MITOCHONDRIAL"/>
    <property type="match status" value="1"/>
</dbReference>
<dbReference type="Pfam" id="PF00466">
    <property type="entry name" value="Ribosomal_L10"/>
    <property type="match status" value="1"/>
</dbReference>
<dbReference type="SUPFAM" id="SSF160369">
    <property type="entry name" value="Ribosomal protein L10-like"/>
    <property type="match status" value="1"/>
</dbReference>
<dbReference type="PROSITE" id="PS01109">
    <property type="entry name" value="RIBOSOMAL_L10"/>
    <property type="match status" value="1"/>
</dbReference>
<name>RL10_METSB</name>
<keyword id="KW-1185">Reference proteome</keyword>
<keyword id="KW-0687">Ribonucleoprotein</keyword>
<keyword id="KW-0689">Ribosomal protein</keyword>
<keyword id="KW-0694">RNA-binding</keyword>
<keyword id="KW-0699">rRNA-binding</keyword>
<accession>B8EMR9</accession>
<proteinExistence type="inferred from homology"/>
<organism>
    <name type="scientific">Methylocella silvestris (strain DSM 15510 / CIP 108128 / LMG 27833 / NCIMB 13906 / BL2)</name>
    <dbReference type="NCBI Taxonomy" id="395965"/>
    <lineage>
        <taxon>Bacteria</taxon>
        <taxon>Pseudomonadati</taxon>
        <taxon>Pseudomonadota</taxon>
        <taxon>Alphaproteobacteria</taxon>
        <taxon>Hyphomicrobiales</taxon>
        <taxon>Beijerinckiaceae</taxon>
        <taxon>Methylocella</taxon>
    </lineage>
</organism>
<protein>
    <recommendedName>
        <fullName evidence="1">Large ribosomal subunit protein uL10</fullName>
    </recommendedName>
    <alternativeName>
        <fullName evidence="2">50S ribosomal protein L10</fullName>
    </alternativeName>
</protein>
<gene>
    <name evidence="1" type="primary">rplJ</name>
    <name type="ordered locus">Msil_3866</name>
</gene>
<feature type="chain" id="PRO_1000195556" description="Large ribosomal subunit protein uL10">
    <location>
        <begin position="1"/>
        <end position="171"/>
    </location>
</feature>
<evidence type="ECO:0000255" key="1">
    <source>
        <dbReference type="HAMAP-Rule" id="MF_00362"/>
    </source>
</evidence>
<evidence type="ECO:0000305" key="2"/>
<sequence>MDRAEKKECVESLSEVFKSTSVVVVAHYSGLTVAQMQNLRKQMRAAGAAVQVAKNRLVKIALEGSEVASIADLMRGPTLIAYSADPVAAAKAAVAFAKDNDKLVILGGAMGKTALNADAVKSLATMPSLDELRAKLVGLIQAPATKLAQLVNAPAGKLARVISAYAEKDAA</sequence>
<reference key="1">
    <citation type="journal article" date="2010" name="J. Bacteriol.">
        <title>Complete genome sequence of the aerobic facultative methanotroph Methylocella silvestris BL2.</title>
        <authorList>
            <person name="Chen Y."/>
            <person name="Crombie A."/>
            <person name="Rahman M.T."/>
            <person name="Dedysh S.N."/>
            <person name="Liesack W."/>
            <person name="Stott M.B."/>
            <person name="Alam M."/>
            <person name="Theisen A.R."/>
            <person name="Murrell J.C."/>
            <person name="Dunfield P.F."/>
        </authorList>
    </citation>
    <scope>NUCLEOTIDE SEQUENCE [LARGE SCALE GENOMIC DNA]</scope>
    <source>
        <strain>DSM 15510 / CIP 108128 / LMG 27833 / NCIMB 13906 / BL2</strain>
    </source>
</reference>